<feature type="chain" id="PRO_0000253077" description="Putative membrane protein insertion efficiency factor">
    <location>
        <begin position="1"/>
        <end position="78"/>
    </location>
</feature>
<dbReference type="EMBL" id="AE017355">
    <property type="protein sequence ID" value="AAT60964.1"/>
    <property type="molecule type" value="Genomic_DNA"/>
</dbReference>
<dbReference type="RefSeq" id="YP_038838.1">
    <property type="nucleotide sequence ID" value="NC_005957.1"/>
</dbReference>
<dbReference type="KEGG" id="btk:BT9727_4526"/>
<dbReference type="PATRIC" id="fig|281309.8.peg.4822"/>
<dbReference type="HOGENOM" id="CLU_144811_6_0_9"/>
<dbReference type="Proteomes" id="UP000001301">
    <property type="component" value="Chromosome"/>
</dbReference>
<dbReference type="GO" id="GO:0005886">
    <property type="term" value="C:plasma membrane"/>
    <property type="evidence" value="ECO:0007669"/>
    <property type="project" value="UniProtKB-SubCell"/>
</dbReference>
<dbReference type="HAMAP" id="MF_00386">
    <property type="entry name" value="UPF0161_YidD"/>
    <property type="match status" value="1"/>
</dbReference>
<dbReference type="InterPro" id="IPR002696">
    <property type="entry name" value="Membr_insert_effic_factor_YidD"/>
</dbReference>
<dbReference type="NCBIfam" id="TIGR00278">
    <property type="entry name" value="membrane protein insertion efficiency factor YidD"/>
    <property type="match status" value="1"/>
</dbReference>
<dbReference type="PANTHER" id="PTHR33383">
    <property type="entry name" value="MEMBRANE PROTEIN INSERTION EFFICIENCY FACTOR-RELATED"/>
    <property type="match status" value="1"/>
</dbReference>
<dbReference type="PANTHER" id="PTHR33383:SF1">
    <property type="entry name" value="MEMBRANE PROTEIN INSERTION EFFICIENCY FACTOR-RELATED"/>
    <property type="match status" value="1"/>
</dbReference>
<dbReference type="Pfam" id="PF01809">
    <property type="entry name" value="YidD"/>
    <property type="match status" value="1"/>
</dbReference>
<dbReference type="SMART" id="SM01234">
    <property type="entry name" value="Haemolytic"/>
    <property type="match status" value="1"/>
</dbReference>
<comment type="function">
    <text evidence="1">Could be involved in insertion of integral membrane proteins into the membrane.</text>
</comment>
<comment type="subcellular location">
    <subcellularLocation>
        <location evidence="1">Cell membrane</location>
        <topology evidence="1">Peripheral membrane protein</topology>
        <orientation evidence="1">Cytoplasmic side</orientation>
    </subcellularLocation>
</comment>
<comment type="similarity">
    <text evidence="1">Belongs to the UPF0161 family.</text>
</comment>
<organism>
    <name type="scientific">Bacillus thuringiensis subsp. konkukian (strain 97-27)</name>
    <dbReference type="NCBI Taxonomy" id="281309"/>
    <lineage>
        <taxon>Bacteria</taxon>
        <taxon>Bacillati</taxon>
        <taxon>Bacillota</taxon>
        <taxon>Bacilli</taxon>
        <taxon>Bacillales</taxon>
        <taxon>Bacillaceae</taxon>
        <taxon>Bacillus</taxon>
        <taxon>Bacillus cereus group</taxon>
    </lineage>
</organism>
<accession>Q6HC88</accession>
<reference key="1">
    <citation type="journal article" date="2006" name="J. Bacteriol.">
        <title>Pathogenomic sequence analysis of Bacillus cereus and Bacillus thuringiensis isolates closely related to Bacillus anthracis.</title>
        <authorList>
            <person name="Han C.S."/>
            <person name="Xie G."/>
            <person name="Challacombe J.F."/>
            <person name="Altherr M.R."/>
            <person name="Bhotika S.S."/>
            <person name="Bruce D."/>
            <person name="Campbell C.S."/>
            <person name="Campbell M.L."/>
            <person name="Chen J."/>
            <person name="Chertkov O."/>
            <person name="Cleland C."/>
            <person name="Dimitrijevic M."/>
            <person name="Doggett N.A."/>
            <person name="Fawcett J.J."/>
            <person name="Glavina T."/>
            <person name="Goodwin L.A."/>
            <person name="Hill K.K."/>
            <person name="Hitchcock P."/>
            <person name="Jackson P.J."/>
            <person name="Keim P."/>
            <person name="Kewalramani A.R."/>
            <person name="Longmire J."/>
            <person name="Lucas S."/>
            <person name="Malfatti S."/>
            <person name="McMurry K."/>
            <person name="Meincke L.J."/>
            <person name="Misra M."/>
            <person name="Moseman B.L."/>
            <person name="Mundt M."/>
            <person name="Munk A.C."/>
            <person name="Okinaka R.T."/>
            <person name="Parson-Quintana B."/>
            <person name="Reilly L.P."/>
            <person name="Richardson P."/>
            <person name="Robinson D.L."/>
            <person name="Rubin E."/>
            <person name="Saunders E."/>
            <person name="Tapia R."/>
            <person name="Tesmer J.G."/>
            <person name="Thayer N."/>
            <person name="Thompson L.S."/>
            <person name="Tice H."/>
            <person name="Ticknor L.O."/>
            <person name="Wills P.L."/>
            <person name="Brettin T.S."/>
            <person name="Gilna P."/>
        </authorList>
    </citation>
    <scope>NUCLEOTIDE SEQUENCE [LARGE SCALE GENOMIC DNA]</scope>
    <source>
        <strain>97-27</strain>
    </source>
</reference>
<proteinExistence type="inferred from homology"/>
<gene>
    <name type="ordered locus">BT9727_4526</name>
</gene>
<protein>
    <recommendedName>
        <fullName evidence="1">Putative membrane protein insertion efficiency factor</fullName>
    </recommendedName>
</protein>
<name>YIDD_BACHK</name>
<keyword id="KW-1003">Cell membrane</keyword>
<keyword id="KW-0472">Membrane</keyword>
<evidence type="ECO:0000255" key="1">
    <source>
        <dbReference type="HAMAP-Rule" id="MF_00386"/>
    </source>
</evidence>
<sequence length="78" mass="9085">MKQIFIGIIRFYQKFISPMTPPTCRFYPTCSHYGLEAFQKHGALKGFWLTCKRILKCHPFHPGGFDPVPDKKDDKVHS</sequence>